<feature type="transit peptide" description="Mitochondrion" evidence="1">
    <location>
        <begin position="1"/>
        <end position="23"/>
    </location>
</feature>
<feature type="chain" id="PRO_0000413401" description="Glutamyl-tRNA(Gln) amidotransferase subunit F, mitochondrial">
    <location>
        <begin position="24"/>
        <end position="183"/>
    </location>
</feature>
<evidence type="ECO:0000255" key="1">
    <source>
        <dbReference type="HAMAP-Rule" id="MF_03151"/>
    </source>
</evidence>
<organism>
    <name type="scientific">Debaryomyces hansenii (strain ATCC 36239 / CBS 767 / BCRC 21394 / JCM 1990 / NBRC 0083 / IGC 2968)</name>
    <name type="common">Yeast</name>
    <name type="synonym">Torulaspora hansenii</name>
    <dbReference type="NCBI Taxonomy" id="284592"/>
    <lineage>
        <taxon>Eukaryota</taxon>
        <taxon>Fungi</taxon>
        <taxon>Dikarya</taxon>
        <taxon>Ascomycota</taxon>
        <taxon>Saccharomycotina</taxon>
        <taxon>Pichiomycetes</taxon>
        <taxon>Debaryomycetaceae</taxon>
        <taxon>Debaryomyces</taxon>
    </lineage>
</organism>
<proteinExistence type="inferred from homology"/>
<dbReference type="EC" id="6.3.5.-" evidence="1"/>
<dbReference type="EMBL" id="CR382134">
    <property type="protein sequence ID" value="CAG85037.2"/>
    <property type="molecule type" value="Genomic_DNA"/>
</dbReference>
<dbReference type="RefSeq" id="XP_457051.2">
    <property type="nucleotide sequence ID" value="XM_457051.2"/>
</dbReference>
<dbReference type="SMR" id="Q6BXL8"/>
<dbReference type="FunCoup" id="Q6BXL8">
    <property type="interactions" value="81"/>
</dbReference>
<dbReference type="STRING" id="284592.Q6BXL8"/>
<dbReference type="GeneID" id="2913765"/>
<dbReference type="KEGG" id="dha:DEHA2B01936g"/>
<dbReference type="VEuPathDB" id="FungiDB:DEHA2B01936g"/>
<dbReference type="eggNOG" id="ENOG502RK44">
    <property type="taxonomic scope" value="Eukaryota"/>
</dbReference>
<dbReference type="HOGENOM" id="CLU_127195_0_0_1"/>
<dbReference type="InParanoid" id="Q6BXL8"/>
<dbReference type="OMA" id="STWSINE"/>
<dbReference type="OrthoDB" id="4024285at2759"/>
<dbReference type="Proteomes" id="UP000000599">
    <property type="component" value="Chromosome B"/>
</dbReference>
<dbReference type="GO" id="GO:0030956">
    <property type="term" value="C:glutamyl-tRNA(Gln) amidotransferase complex"/>
    <property type="evidence" value="ECO:0007669"/>
    <property type="project" value="UniProtKB-UniRule"/>
</dbReference>
<dbReference type="GO" id="GO:0005743">
    <property type="term" value="C:mitochondrial inner membrane"/>
    <property type="evidence" value="ECO:0007669"/>
    <property type="project" value="UniProtKB-SubCell"/>
</dbReference>
<dbReference type="GO" id="GO:0005524">
    <property type="term" value="F:ATP binding"/>
    <property type="evidence" value="ECO:0007669"/>
    <property type="project" value="UniProtKB-KW"/>
</dbReference>
<dbReference type="GO" id="GO:0050567">
    <property type="term" value="F:glutaminyl-tRNA synthase (glutamine-hydrolyzing) activity"/>
    <property type="evidence" value="ECO:0007669"/>
    <property type="project" value="UniProtKB-UniRule"/>
</dbReference>
<dbReference type="GO" id="GO:0070681">
    <property type="term" value="P:glutaminyl-tRNAGln biosynthesis via transamidation"/>
    <property type="evidence" value="ECO:0007669"/>
    <property type="project" value="UniProtKB-UniRule"/>
</dbReference>
<dbReference type="GO" id="GO:0032543">
    <property type="term" value="P:mitochondrial translation"/>
    <property type="evidence" value="ECO:0007669"/>
    <property type="project" value="UniProtKB-UniRule"/>
</dbReference>
<dbReference type="CDD" id="cd21422">
    <property type="entry name" value="GatF"/>
    <property type="match status" value="1"/>
</dbReference>
<dbReference type="HAMAP" id="MF_03151">
    <property type="entry name" value="GatF"/>
    <property type="match status" value="1"/>
</dbReference>
<dbReference type="InterPro" id="IPR027499">
    <property type="entry name" value="GatF"/>
</dbReference>
<dbReference type="Pfam" id="PF20977">
    <property type="entry name" value="GatF"/>
    <property type="match status" value="1"/>
</dbReference>
<protein>
    <recommendedName>
        <fullName evidence="1">Glutamyl-tRNA(Gln) amidotransferase subunit F, mitochondrial</fullName>
        <shortName evidence="1">Glu-AdT subunit F</shortName>
        <ecNumber evidence="1">6.3.5.-</ecNumber>
    </recommendedName>
</protein>
<sequence>MSRMLNQIPRLITRSFRTSSVGYKATLGPILENKSQIQDLVNKSEWNIVDIIKFSEDEVRNIKIDSRVITKMLRASGLKDSLSEDQKKSLIRGLKLQMIFIKYLYEGDEAEFHKIEESNDDVFRLILSDHKAPKPITLKSLLSSIENLENEVDAEKGEIKSSLDISKLNGNNPTYFTVRSNKE</sequence>
<reference key="1">
    <citation type="journal article" date="2004" name="Nature">
        <title>Genome evolution in yeasts.</title>
        <authorList>
            <person name="Dujon B."/>
            <person name="Sherman D."/>
            <person name="Fischer G."/>
            <person name="Durrens P."/>
            <person name="Casaregola S."/>
            <person name="Lafontaine I."/>
            <person name="de Montigny J."/>
            <person name="Marck C."/>
            <person name="Neuveglise C."/>
            <person name="Talla E."/>
            <person name="Goffard N."/>
            <person name="Frangeul L."/>
            <person name="Aigle M."/>
            <person name="Anthouard V."/>
            <person name="Babour A."/>
            <person name="Barbe V."/>
            <person name="Barnay S."/>
            <person name="Blanchin S."/>
            <person name="Beckerich J.-M."/>
            <person name="Beyne E."/>
            <person name="Bleykasten C."/>
            <person name="Boisrame A."/>
            <person name="Boyer J."/>
            <person name="Cattolico L."/>
            <person name="Confanioleri F."/>
            <person name="de Daruvar A."/>
            <person name="Despons L."/>
            <person name="Fabre E."/>
            <person name="Fairhead C."/>
            <person name="Ferry-Dumazet H."/>
            <person name="Groppi A."/>
            <person name="Hantraye F."/>
            <person name="Hennequin C."/>
            <person name="Jauniaux N."/>
            <person name="Joyet P."/>
            <person name="Kachouri R."/>
            <person name="Kerrest A."/>
            <person name="Koszul R."/>
            <person name="Lemaire M."/>
            <person name="Lesur I."/>
            <person name="Ma L."/>
            <person name="Muller H."/>
            <person name="Nicaud J.-M."/>
            <person name="Nikolski M."/>
            <person name="Oztas S."/>
            <person name="Ozier-Kalogeropoulos O."/>
            <person name="Pellenz S."/>
            <person name="Potier S."/>
            <person name="Richard G.-F."/>
            <person name="Straub M.-L."/>
            <person name="Suleau A."/>
            <person name="Swennen D."/>
            <person name="Tekaia F."/>
            <person name="Wesolowski-Louvel M."/>
            <person name="Westhof E."/>
            <person name="Wirth B."/>
            <person name="Zeniou-Meyer M."/>
            <person name="Zivanovic Y."/>
            <person name="Bolotin-Fukuhara M."/>
            <person name="Thierry A."/>
            <person name="Bouchier C."/>
            <person name="Caudron B."/>
            <person name="Scarpelli C."/>
            <person name="Gaillardin C."/>
            <person name="Weissenbach J."/>
            <person name="Wincker P."/>
            <person name="Souciet J.-L."/>
        </authorList>
    </citation>
    <scope>NUCLEOTIDE SEQUENCE [LARGE SCALE GENOMIC DNA]</scope>
    <source>
        <strain>ATCC 36239 / CBS 767 / BCRC 21394 / JCM 1990 / NBRC 0083 / IGC 2968</strain>
    </source>
</reference>
<accession>Q6BXL8</accession>
<gene>
    <name evidence="1" type="primary">GTF1</name>
    <name type="ordered locus">DEHA2B01936g</name>
</gene>
<keyword id="KW-0067">ATP-binding</keyword>
<keyword id="KW-0436">Ligase</keyword>
<keyword id="KW-0472">Membrane</keyword>
<keyword id="KW-0496">Mitochondrion</keyword>
<keyword id="KW-0999">Mitochondrion inner membrane</keyword>
<keyword id="KW-0547">Nucleotide-binding</keyword>
<keyword id="KW-0648">Protein biosynthesis</keyword>
<keyword id="KW-1185">Reference proteome</keyword>
<keyword id="KW-0809">Transit peptide</keyword>
<name>GATF_DEBHA</name>
<comment type="function">
    <text evidence="1">Allows the formation of correctly charged Gln-tRNA(Gln) through the transamidation of misacylated Glu-tRNA(Gln) in the mitochondria. The reaction takes place in the presence of glutamine and ATP through an activated gamma-phospho-Glu-tRNA(Gln). Required for proper protein synthesis within the mitochondrion.</text>
</comment>
<comment type="catalytic activity">
    <reaction evidence="1">
        <text>L-glutamyl-tRNA(Gln) + L-glutamine + ATP + H2O = L-glutaminyl-tRNA(Gln) + L-glutamate + ADP + phosphate + H(+)</text>
        <dbReference type="Rhea" id="RHEA:17521"/>
        <dbReference type="Rhea" id="RHEA-COMP:9681"/>
        <dbReference type="Rhea" id="RHEA-COMP:9684"/>
        <dbReference type="ChEBI" id="CHEBI:15377"/>
        <dbReference type="ChEBI" id="CHEBI:15378"/>
        <dbReference type="ChEBI" id="CHEBI:29985"/>
        <dbReference type="ChEBI" id="CHEBI:30616"/>
        <dbReference type="ChEBI" id="CHEBI:43474"/>
        <dbReference type="ChEBI" id="CHEBI:58359"/>
        <dbReference type="ChEBI" id="CHEBI:78520"/>
        <dbReference type="ChEBI" id="CHEBI:78521"/>
        <dbReference type="ChEBI" id="CHEBI:456216"/>
    </reaction>
</comment>
<comment type="subunit">
    <text evidence="1">Subunit of the heterotrimeric GatFAB amidotransferase (AdT) complex, composed of A, B and F subunits.</text>
</comment>
<comment type="subcellular location">
    <subcellularLocation>
        <location evidence="1">Mitochondrion inner membrane</location>
        <topology evidence="1">Peripheral membrane protein</topology>
        <orientation evidence="1">Matrix side</orientation>
    </subcellularLocation>
</comment>
<comment type="similarity">
    <text evidence="1">Belongs to the GatF family.</text>
</comment>